<protein>
    <recommendedName>
        <fullName evidence="1">Small ribosomal subunit protein uS14</fullName>
    </recommendedName>
    <alternativeName>
        <fullName evidence="2">30S ribosomal protein S14 type Z</fullName>
    </alternativeName>
</protein>
<feature type="chain" id="PRO_1000143909" description="Small ribosomal subunit protein uS14">
    <location>
        <begin position="1"/>
        <end position="61"/>
    </location>
</feature>
<feature type="binding site" evidence="1">
    <location>
        <position position="24"/>
    </location>
    <ligand>
        <name>Zn(2+)</name>
        <dbReference type="ChEBI" id="CHEBI:29105"/>
    </ligand>
</feature>
<feature type="binding site" evidence="1">
    <location>
        <position position="27"/>
    </location>
    <ligand>
        <name>Zn(2+)</name>
        <dbReference type="ChEBI" id="CHEBI:29105"/>
    </ligand>
</feature>
<feature type="binding site" evidence="1">
    <location>
        <position position="40"/>
    </location>
    <ligand>
        <name>Zn(2+)</name>
        <dbReference type="ChEBI" id="CHEBI:29105"/>
    </ligand>
</feature>
<feature type="binding site" evidence="1">
    <location>
        <position position="43"/>
    </location>
    <ligand>
        <name>Zn(2+)</name>
        <dbReference type="ChEBI" id="CHEBI:29105"/>
    </ligand>
</feature>
<gene>
    <name evidence="1" type="primary">rpsZ</name>
    <name evidence="1" type="synonym">rpsN</name>
    <name type="ordered locus">Haur_4927</name>
</gene>
<proteinExistence type="inferred from homology"/>
<reference key="1">
    <citation type="journal article" date="2011" name="Stand. Genomic Sci.">
        <title>Complete genome sequence of the filamentous gliding predatory bacterium Herpetosiphon aurantiacus type strain (114-95(T)).</title>
        <authorList>
            <person name="Kiss H."/>
            <person name="Nett M."/>
            <person name="Domin N."/>
            <person name="Martin K."/>
            <person name="Maresca J.A."/>
            <person name="Copeland A."/>
            <person name="Lapidus A."/>
            <person name="Lucas S."/>
            <person name="Berry K.W."/>
            <person name="Glavina Del Rio T."/>
            <person name="Dalin E."/>
            <person name="Tice H."/>
            <person name="Pitluck S."/>
            <person name="Richardson P."/>
            <person name="Bruce D."/>
            <person name="Goodwin L."/>
            <person name="Han C."/>
            <person name="Detter J.C."/>
            <person name="Schmutz J."/>
            <person name="Brettin T."/>
            <person name="Land M."/>
            <person name="Hauser L."/>
            <person name="Kyrpides N.C."/>
            <person name="Ivanova N."/>
            <person name="Goeker M."/>
            <person name="Woyke T."/>
            <person name="Klenk H.P."/>
            <person name="Bryant D.A."/>
        </authorList>
    </citation>
    <scope>NUCLEOTIDE SEQUENCE [LARGE SCALE GENOMIC DNA]</scope>
    <source>
        <strain>ATCC 23779 / DSM 785 / 114-95</strain>
    </source>
</reference>
<keyword id="KW-0479">Metal-binding</keyword>
<keyword id="KW-0687">Ribonucleoprotein</keyword>
<keyword id="KW-0689">Ribosomal protein</keyword>
<keyword id="KW-0694">RNA-binding</keyword>
<keyword id="KW-0699">rRNA-binding</keyword>
<keyword id="KW-0862">Zinc</keyword>
<evidence type="ECO:0000255" key="1">
    <source>
        <dbReference type="HAMAP-Rule" id="MF_01364"/>
    </source>
</evidence>
<evidence type="ECO:0000305" key="2"/>
<dbReference type="EMBL" id="CP000875">
    <property type="protein sequence ID" value="ABX07557.1"/>
    <property type="molecule type" value="Genomic_DNA"/>
</dbReference>
<dbReference type="SMR" id="A9B424"/>
<dbReference type="FunCoup" id="A9B424">
    <property type="interactions" value="121"/>
</dbReference>
<dbReference type="STRING" id="316274.Haur_4927"/>
<dbReference type="KEGG" id="hau:Haur_4927"/>
<dbReference type="eggNOG" id="COG0199">
    <property type="taxonomic scope" value="Bacteria"/>
</dbReference>
<dbReference type="HOGENOM" id="CLU_139869_3_0_0"/>
<dbReference type="InParanoid" id="A9B424"/>
<dbReference type="Proteomes" id="UP000000787">
    <property type="component" value="Chromosome"/>
</dbReference>
<dbReference type="GO" id="GO:0005737">
    <property type="term" value="C:cytoplasm"/>
    <property type="evidence" value="ECO:0007669"/>
    <property type="project" value="UniProtKB-ARBA"/>
</dbReference>
<dbReference type="GO" id="GO:0015935">
    <property type="term" value="C:small ribosomal subunit"/>
    <property type="evidence" value="ECO:0007669"/>
    <property type="project" value="TreeGrafter"/>
</dbReference>
<dbReference type="GO" id="GO:0019843">
    <property type="term" value="F:rRNA binding"/>
    <property type="evidence" value="ECO:0007669"/>
    <property type="project" value="UniProtKB-UniRule"/>
</dbReference>
<dbReference type="GO" id="GO:0003735">
    <property type="term" value="F:structural constituent of ribosome"/>
    <property type="evidence" value="ECO:0007669"/>
    <property type="project" value="InterPro"/>
</dbReference>
<dbReference type="GO" id="GO:0008270">
    <property type="term" value="F:zinc ion binding"/>
    <property type="evidence" value="ECO:0007669"/>
    <property type="project" value="UniProtKB-UniRule"/>
</dbReference>
<dbReference type="GO" id="GO:0006412">
    <property type="term" value="P:translation"/>
    <property type="evidence" value="ECO:0007669"/>
    <property type="project" value="UniProtKB-UniRule"/>
</dbReference>
<dbReference type="FunFam" id="4.10.830.10:FF:000001">
    <property type="entry name" value="30S ribosomal protein S14 type Z"/>
    <property type="match status" value="1"/>
</dbReference>
<dbReference type="Gene3D" id="4.10.830.10">
    <property type="entry name" value="30s Ribosomal Protein S14, Chain N"/>
    <property type="match status" value="1"/>
</dbReference>
<dbReference type="HAMAP" id="MF_01364_B">
    <property type="entry name" value="Ribosomal_uS14_2_B"/>
    <property type="match status" value="1"/>
</dbReference>
<dbReference type="InterPro" id="IPR001209">
    <property type="entry name" value="Ribosomal_uS14"/>
</dbReference>
<dbReference type="InterPro" id="IPR023053">
    <property type="entry name" value="Ribosomal_uS14_bact"/>
</dbReference>
<dbReference type="InterPro" id="IPR018271">
    <property type="entry name" value="Ribosomal_uS14_CS"/>
</dbReference>
<dbReference type="InterPro" id="IPR043140">
    <property type="entry name" value="Ribosomal_uS14_sf"/>
</dbReference>
<dbReference type="NCBIfam" id="NF005974">
    <property type="entry name" value="PRK08061.1"/>
    <property type="match status" value="1"/>
</dbReference>
<dbReference type="PANTHER" id="PTHR19836">
    <property type="entry name" value="30S RIBOSOMAL PROTEIN S14"/>
    <property type="match status" value="1"/>
</dbReference>
<dbReference type="PANTHER" id="PTHR19836:SF19">
    <property type="entry name" value="SMALL RIBOSOMAL SUBUNIT PROTEIN US14M"/>
    <property type="match status" value="1"/>
</dbReference>
<dbReference type="Pfam" id="PF00253">
    <property type="entry name" value="Ribosomal_S14"/>
    <property type="match status" value="1"/>
</dbReference>
<dbReference type="SUPFAM" id="SSF57716">
    <property type="entry name" value="Glucocorticoid receptor-like (DNA-binding domain)"/>
    <property type="match status" value="1"/>
</dbReference>
<dbReference type="PROSITE" id="PS00527">
    <property type="entry name" value="RIBOSOMAL_S14"/>
    <property type="match status" value="1"/>
</dbReference>
<comment type="function">
    <text evidence="1">Binds 16S rRNA, required for the assembly of 30S particles and may also be responsible for determining the conformation of the 16S rRNA at the A site.</text>
</comment>
<comment type="cofactor">
    <cofactor evidence="1">
        <name>Zn(2+)</name>
        <dbReference type="ChEBI" id="CHEBI:29105"/>
    </cofactor>
    <text evidence="1">Binds 1 zinc ion per subunit.</text>
</comment>
<comment type="subunit">
    <text evidence="1">Part of the 30S ribosomal subunit. Contacts proteins S3 and S10.</text>
</comment>
<comment type="similarity">
    <text evidence="1">Belongs to the universal ribosomal protein uS14 family. Zinc-binding uS14 subfamily.</text>
</comment>
<name>RS14Z_HERA2</name>
<accession>A9B424</accession>
<sequence length="61" mass="6985">MAKKSMIVKANRAPKFSTQGYNRCKRCGRPRAYMRKFGICRICFRELASQGLIPGVTKSSW</sequence>
<organism>
    <name type="scientific">Herpetosiphon aurantiacus (strain ATCC 23779 / DSM 785 / 114-95)</name>
    <dbReference type="NCBI Taxonomy" id="316274"/>
    <lineage>
        <taxon>Bacteria</taxon>
        <taxon>Bacillati</taxon>
        <taxon>Chloroflexota</taxon>
        <taxon>Chloroflexia</taxon>
        <taxon>Herpetosiphonales</taxon>
        <taxon>Herpetosiphonaceae</taxon>
        <taxon>Herpetosiphon</taxon>
    </lineage>
</organism>